<keyword id="KW-0150">Chloroplast</keyword>
<keyword id="KW-0507">mRNA processing</keyword>
<keyword id="KW-0934">Plastid</keyword>
<keyword id="KW-0694">RNA-binding</keyword>
<keyword id="KW-0819">tRNA processing</keyword>
<geneLocation type="chloroplast"/>
<reference key="1">
    <citation type="submission" date="2000-09" db="EMBL/GenBank/DDBJ databases">
        <title>Lilium longiflorum maturase (matK) gene, complete cds; chloroplast gene.</title>
        <authorList>
            <person name="Nishikawa T."/>
            <person name="Okazaki K."/>
            <person name="Arakawa K."/>
            <person name="Nagamine T."/>
        </authorList>
    </citation>
    <scope>NUCLEOTIDE SEQUENCE [GENOMIC DNA]</scope>
</reference>
<feature type="chain" id="PRO_0000143476" description="Maturase K">
    <location>
        <begin position="1"/>
        <end position="512"/>
    </location>
</feature>
<accession>Q9B1U9</accession>
<comment type="function">
    <text evidence="1">Usually encoded in the trnK tRNA gene intron. Probably assists in splicing its own and other chloroplast group II introns.</text>
</comment>
<comment type="subcellular location">
    <subcellularLocation>
        <location>Plastid</location>
        <location>Chloroplast</location>
    </subcellularLocation>
</comment>
<comment type="similarity">
    <text evidence="1">Belongs to the intron maturase 2 family. MatK subfamily.</text>
</comment>
<organism>
    <name type="scientific">Lilium longiflorum</name>
    <name type="common">Trumpet lily</name>
    <dbReference type="NCBI Taxonomy" id="4690"/>
    <lineage>
        <taxon>Eukaryota</taxon>
        <taxon>Viridiplantae</taxon>
        <taxon>Streptophyta</taxon>
        <taxon>Embryophyta</taxon>
        <taxon>Tracheophyta</taxon>
        <taxon>Spermatophyta</taxon>
        <taxon>Magnoliopsida</taxon>
        <taxon>Liliopsida</taxon>
        <taxon>Liliales</taxon>
        <taxon>Liliaceae</taxon>
        <taxon>Lilium</taxon>
    </lineage>
</organism>
<gene>
    <name evidence="1" type="primary">matK</name>
</gene>
<evidence type="ECO:0000255" key="1">
    <source>
        <dbReference type="HAMAP-Rule" id="MF_01390"/>
    </source>
</evidence>
<sequence>MEELQGYLKKDRSPQQHFLYPLLLQEYIYTLAHDDSLNGSIFYEPIEFIGYDNKFSLVLVKRLIIRMYQQNFLIYLVNDSNQNRFGGHTNSFYSHFFYSQMVSKGFSVIVEIPFSLRLVSSSEEKEIPKSQNLGSIHSIFPFLEDKLSHLNNVSDILIPHPIHFEILVQILQCWIQDVPSLHLLRFFLHKYQNLNKTIQSNKTIYVFSKENKRLFWFLYNSYVSECEFLLVFFHKQSCYLRSTSSGTFLERSHFYGKMEHIIIVCCNNFHKTLWPIKDPLIHYVRYQGKAILASRGTHLLMKKWRYYFVNFWQYYFHFWSQPYRMHINSLLNYSFYFMGYLLRVLINPYAVKNQMLENSFLIDTVIKKFDTIIPIIPLIGSLSKAKFCTFSGHPISKPIWADLSDFDIIDRFGRICRNLSHYYSGSSKKQSLYRIKYILRLSCARTLARKHKSTARALLQRLGLGFLEEFFTEEEQVLSFIFPKTTLFTLHGSHRERIWSLDIIRINDLVNN</sequence>
<name>MATK_LILLO</name>
<protein>
    <recommendedName>
        <fullName evidence="1">Maturase K</fullName>
    </recommendedName>
    <alternativeName>
        <fullName evidence="1">Intron maturase</fullName>
    </alternativeName>
</protein>
<proteinExistence type="inferred from homology"/>
<dbReference type="EMBL" id="AB049525">
    <property type="protein sequence ID" value="BAB40216.1"/>
    <property type="molecule type" value="Genomic_DNA"/>
</dbReference>
<dbReference type="RefSeq" id="YP_010382911.1">
    <property type="nucleotide sequence ID" value="NC_063560.1"/>
</dbReference>
<dbReference type="GeneID" id="72645932"/>
<dbReference type="GO" id="GO:0009507">
    <property type="term" value="C:chloroplast"/>
    <property type="evidence" value="ECO:0007669"/>
    <property type="project" value="UniProtKB-SubCell"/>
</dbReference>
<dbReference type="GO" id="GO:0003723">
    <property type="term" value="F:RNA binding"/>
    <property type="evidence" value="ECO:0007669"/>
    <property type="project" value="UniProtKB-KW"/>
</dbReference>
<dbReference type="GO" id="GO:0006397">
    <property type="term" value="P:mRNA processing"/>
    <property type="evidence" value="ECO:0007669"/>
    <property type="project" value="UniProtKB-KW"/>
</dbReference>
<dbReference type="GO" id="GO:0008380">
    <property type="term" value="P:RNA splicing"/>
    <property type="evidence" value="ECO:0007669"/>
    <property type="project" value="UniProtKB-UniRule"/>
</dbReference>
<dbReference type="GO" id="GO:0008033">
    <property type="term" value="P:tRNA processing"/>
    <property type="evidence" value="ECO:0007669"/>
    <property type="project" value="UniProtKB-KW"/>
</dbReference>
<dbReference type="HAMAP" id="MF_01390">
    <property type="entry name" value="MatK"/>
    <property type="match status" value="1"/>
</dbReference>
<dbReference type="InterPro" id="IPR024937">
    <property type="entry name" value="Domain_X"/>
</dbReference>
<dbReference type="InterPro" id="IPR002866">
    <property type="entry name" value="Maturase_MatK"/>
</dbReference>
<dbReference type="InterPro" id="IPR024942">
    <property type="entry name" value="Maturase_MatK_N"/>
</dbReference>
<dbReference type="PANTHER" id="PTHR34811">
    <property type="entry name" value="MATURASE K"/>
    <property type="match status" value="1"/>
</dbReference>
<dbReference type="PANTHER" id="PTHR34811:SF1">
    <property type="entry name" value="MATURASE K"/>
    <property type="match status" value="1"/>
</dbReference>
<dbReference type="Pfam" id="PF01348">
    <property type="entry name" value="Intron_maturas2"/>
    <property type="match status" value="1"/>
</dbReference>
<dbReference type="Pfam" id="PF01824">
    <property type="entry name" value="MatK_N"/>
    <property type="match status" value="1"/>
</dbReference>